<accession>Q8DEL1</accession>
<comment type="function">
    <text evidence="1">Cell wall formation.</text>
</comment>
<comment type="catalytic activity">
    <reaction evidence="1">
        <text>UDP-N-acetyl-alpha-D-muramate + L-alanine + ATP = UDP-N-acetyl-alpha-D-muramoyl-L-alanine + ADP + phosphate + H(+)</text>
        <dbReference type="Rhea" id="RHEA:23372"/>
        <dbReference type="ChEBI" id="CHEBI:15378"/>
        <dbReference type="ChEBI" id="CHEBI:30616"/>
        <dbReference type="ChEBI" id="CHEBI:43474"/>
        <dbReference type="ChEBI" id="CHEBI:57972"/>
        <dbReference type="ChEBI" id="CHEBI:70757"/>
        <dbReference type="ChEBI" id="CHEBI:83898"/>
        <dbReference type="ChEBI" id="CHEBI:456216"/>
        <dbReference type="EC" id="6.3.2.8"/>
    </reaction>
</comment>
<comment type="pathway">
    <text evidence="1">Cell wall biogenesis; peptidoglycan biosynthesis.</text>
</comment>
<comment type="subcellular location">
    <subcellularLocation>
        <location evidence="1">Cytoplasm</location>
    </subcellularLocation>
</comment>
<comment type="similarity">
    <text evidence="1">Belongs to the MurCDEF family.</text>
</comment>
<evidence type="ECO:0000255" key="1">
    <source>
        <dbReference type="HAMAP-Rule" id="MF_00046"/>
    </source>
</evidence>
<gene>
    <name evidence="1" type="primary">murC</name>
    <name type="ordered locus">VV1_0577</name>
</gene>
<reference key="1">
    <citation type="submission" date="2002-12" db="EMBL/GenBank/DDBJ databases">
        <title>Complete genome sequence of Vibrio vulnificus CMCP6.</title>
        <authorList>
            <person name="Rhee J.H."/>
            <person name="Kim S.Y."/>
            <person name="Chung S.S."/>
            <person name="Kim J.J."/>
            <person name="Moon Y.H."/>
            <person name="Jeong H."/>
            <person name="Choy H.E."/>
        </authorList>
    </citation>
    <scope>NUCLEOTIDE SEQUENCE [LARGE SCALE GENOMIC DNA]</scope>
    <source>
        <strain>CMCP6</strain>
    </source>
</reference>
<dbReference type="EC" id="6.3.2.8" evidence="1"/>
<dbReference type="EMBL" id="AE016795">
    <property type="protein sequence ID" value="AAO09093.1"/>
    <property type="molecule type" value="Genomic_DNA"/>
</dbReference>
<dbReference type="RefSeq" id="WP_011078662.1">
    <property type="nucleotide sequence ID" value="NC_004459.3"/>
</dbReference>
<dbReference type="SMR" id="Q8DEL1"/>
<dbReference type="KEGG" id="vvu:VV1_0577"/>
<dbReference type="HOGENOM" id="CLU_028104_2_2_6"/>
<dbReference type="UniPathway" id="UPA00219"/>
<dbReference type="Proteomes" id="UP000002275">
    <property type="component" value="Chromosome 1"/>
</dbReference>
<dbReference type="GO" id="GO:0005737">
    <property type="term" value="C:cytoplasm"/>
    <property type="evidence" value="ECO:0007669"/>
    <property type="project" value="UniProtKB-SubCell"/>
</dbReference>
<dbReference type="GO" id="GO:0005524">
    <property type="term" value="F:ATP binding"/>
    <property type="evidence" value="ECO:0007669"/>
    <property type="project" value="UniProtKB-UniRule"/>
</dbReference>
<dbReference type="GO" id="GO:0008763">
    <property type="term" value="F:UDP-N-acetylmuramate-L-alanine ligase activity"/>
    <property type="evidence" value="ECO:0007669"/>
    <property type="project" value="UniProtKB-UniRule"/>
</dbReference>
<dbReference type="GO" id="GO:0051301">
    <property type="term" value="P:cell division"/>
    <property type="evidence" value="ECO:0007669"/>
    <property type="project" value="UniProtKB-KW"/>
</dbReference>
<dbReference type="GO" id="GO:0071555">
    <property type="term" value="P:cell wall organization"/>
    <property type="evidence" value="ECO:0007669"/>
    <property type="project" value="UniProtKB-KW"/>
</dbReference>
<dbReference type="GO" id="GO:0009252">
    <property type="term" value="P:peptidoglycan biosynthetic process"/>
    <property type="evidence" value="ECO:0007669"/>
    <property type="project" value="UniProtKB-UniRule"/>
</dbReference>
<dbReference type="GO" id="GO:0008360">
    <property type="term" value="P:regulation of cell shape"/>
    <property type="evidence" value="ECO:0007669"/>
    <property type="project" value="UniProtKB-KW"/>
</dbReference>
<dbReference type="FunFam" id="3.40.1190.10:FF:000001">
    <property type="entry name" value="UDP-N-acetylmuramate--L-alanine ligase"/>
    <property type="match status" value="1"/>
</dbReference>
<dbReference type="FunFam" id="3.40.50.720:FF:000046">
    <property type="entry name" value="UDP-N-acetylmuramate--L-alanine ligase"/>
    <property type="match status" value="1"/>
</dbReference>
<dbReference type="Gene3D" id="3.90.190.20">
    <property type="entry name" value="Mur ligase, C-terminal domain"/>
    <property type="match status" value="1"/>
</dbReference>
<dbReference type="Gene3D" id="3.40.1190.10">
    <property type="entry name" value="Mur-like, catalytic domain"/>
    <property type="match status" value="1"/>
</dbReference>
<dbReference type="Gene3D" id="3.40.50.720">
    <property type="entry name" value="NAD(P)-binding Rossmann-like Domain"/>
    <property type="match status" value="1"/>
</dbReference>
<dbReference type="HAMAP" id="MF_00046">
    <property type="entry name" value="MurC"/>
    <property type="match status" value="1"/>
</dbReference>
<dbReference type="InterPro" id="IPR036565">
    <property type="entry name" value="Mur-like_cat_sf"/>
</dbReference>
<dbReference type="InterPro" id="IPR004101">
    <property type="entry name" value="Mur_ligase_C"/>
</dbReference>
<dbReference type="InterPro" id="IPR036615">
    <property type="entry name" value="Mur_ligase_C_dom_sf"/>
</dbReference>
<dbReference type="InterPro" id="IPR013221">
    <property type="entry name" value="Mur_ligase_cen"/>
</dbReference>
<dbReference type="InterPro" id="IPR000713">
    <property type="entry name" value="Mur_ligase_N"/>
</dbReference>
<dbReference type="InterPro" id="IPR050061">
    <property type="entry name" value="MurCDEF_pg_biosynth"/>
</dbReference>
<dbReference type="InterPro" id="IPR005758">
    <property type="entry name" value="UDP-N-AcMur_Ala_ligase_MurC"/>
</dbReference>
<dbReference type="NCBIfam" id="TIGR01082">
    <property type="entry name" value="murC"/>
    <property type="match status" value="1"/>
</dbReference>
<dbReference type="PANTHER" id="PTHR43445:SF3">
    <property type="entry name" value="UDP-N-ACETYLMURAMATE--L-ALANINE LIGASE"/>
    <property type="match status" value="1"/>
</dbReference>
<dbReference type="PANTHER" id="PTHR43445">
    <property type="entry name" value="UDP-N-ACETYLMURAMATE--L-ALANINE LIGASE-RELATED"/>
    <property type="match status" value="1"/>
</dbReference>
<dbReference type="Pfam" id="PF01225">
    <property type="entry name" value="Mur_ligase"/>
    <property type="match status" value="1"/>
</dbReference>
<dbReference type="Pfam" id="PF02875">
    <property type="entry name" value="Mur_ligase_C"/>
    <property type="match status" value="1"/>
</dbReference>
<dbReference type="Pfam" id="PF08245">
    <property type="entry name" value="Mur_ligase_M"/>
    <property type="match status" value="1"/>
</dbReference>
<dbReference type="SUPFAM" id="SSF51984">
    <property type="entry name" value="MurCD N-terminal domain"/>
    <property type="match status" value="1"/>
</dbReference>
<dbReference type="SUPFAM" id="SSF53623">
    <property type="entry name" value="MurD-like peptide ligases, catalytic domain"/>
    <property type="match status" value="1"/>
</dbReference>
<dbReference type="SUPFAM" id="SSF53244">
    <property type="entry name" value="MurD-like peptide ligases, peptide-binding domain"/>
    <property type="match status" value="1"/>
</dbReference>
<name>MURC_VIBVU</name>
<organism>
    <name type="scientific">Vibrio vulnificus (strain CMCP6)</name>
    <dbReference type="NCBI Taxonomy" id="216895"/>
    <lineage>
        <taxon>Bacteria</taxon>
        <taxon>Pseudomonadati</taxon>
        <taxon>Pseudomonadota</taxon>
        <taxon>Gammaproteobacteria</taxon>
        <taxon>Vibrionales</taxon>
        <taxon>Vibrionaceae</taxon>
        <taxon>Vibrio</taxon>
    </lineage>
</organism>
<protein>
    <recommendedName>
        <fullName evidence="1">UDP-N-acetylmuramate--L-alanine ligase</fullName>
        <ecNumber evidence="1">6.3.2.8</ecNumber>
    </recommendedName>
    <alternativeName>
        <fullName evidence="1">UDP-N-acetylmuramoyl-L-alanine synthetase</fullName>
    </alternativeName>
</protein>
<feature type="chain" id="PRO_0000182182" description="UDP-N-acetylmuramate--L-alanine ligase">
    <location>
        <begin position="1"/>
        <end position="486"/>
    </location>
</feature>
<feature type="binding site" evidence="1">
    <location>
        <begin position="129"/>
        <end position="135"/>
    </location>
    <ligand>
        <name>ATP</name>
        <dbReference type="ChEBI" id="CHEBI:30616"/>
    </ligand>
</feature>
<proteinExistence type="inferred from homology"/>
<sequence>MTIQHKQDLAQIRAMVPEMRRVKSIHFIGIGGAGMSGIAEVLLNEGYQITGSDIAENAVTERLAQKGAKVYIGHQATNVAEASVVVVSTAINEANPEVKAAREARIPVVRRAEMLAELMRFRHGIAVAGTHGKTTTTALVTQIYSEAGLDPTFVNGGLVKSAGTNARLGSSRILIAEADESDASFLHLQPMVCIVTNIEADHMDTYGGDFETLKQTFIDFLHNLPFYGQAIVCIDDPVIRELIPRISRQVITYGFSEDADVRIENYRQEGQQGKFTVVRKDCEALDITLNIPGRHNALNAAAAIAVATEDEIGDDAILAAMVGTQGTGRRFEHLGEFETGNGNVMLVDDYGHHPTEVDVTIQAARNGWQEKRLVMIFQPHRYSRTRDLYDDFANVLEQVDVLVMLDVYAAGEKAIAGADSRSLCRTIRSRGKIDPIFVADTQQLPEVLANILQEGDLLLAQGAGDIGKVARQLAALELNISNMKAK</sequence>
<keyword id="KW-0067">ATP-binding</keyword>
<keyword id="KW-0131">Cell cycle</keyword>
<keyword id="KW-0132">Cell division</keyword>
<keyword id="KW-0133">Cell shape</keyword>
<keyword id="KW-0961">Cell wall biogenesis/degradation</keyword>
<keyword id="KW-0963">Cytoplasm</keyword>
<keyword id="KW-0436">Ligase</keyword>
<keyword id="KW-0547">Nucleotide-binding</keyword>
<keyword id="KW-0573">Peptidoglycan synthesis</keyword>